<gene>
    <name type="primary">UL12</name>
    <name type="synonym">AN</name>
</gene>
<organism>
    <name type="scientific">Suid herpesvirus 1 (strain NIA-3)</name>
    <name type="common">SuHV-1</name>
    <name type="synonym">Pseudorabies virus (strain NIA-3)</name>
    <dbReference type="NCBI Taxonomy" id="10349"/>
    <lineage>
        <taxon>Viruses</taxon>
        <taxon>Duplodnaviria</taxon>
        <taxon>Heunggongvirae</taxon>
        <taxon>Peploviricota</taxon>
        <taxon>Herviviricetes</taxon>
        <taxon>Herpesvirales</taxon>
        <taxon>Orthoherpesviridae</taxon>
        <taxon>Alphaherpesvirinae</taxon>
        <taxon>Varicellovirus</taxon>
        <taxon>Varicellovirus suidalpha1</taxon>
        <taxon>Suid herpesvirus 1</taxon>
    </lineage>
</organism>
<sequence length="150" mass="15426">MAALVLPNSLPEELAARTFLRFLRGAPRPAAGGAAPLAYRLAYVHDLLVELARHGLAAPDAAAAAFGGARPPPAPAGVPAAAARAAILTVEAATRAQSESDLWTLLRRGLATASTVRWGADGPHFPPTWCEASTARCGTPDNAALIFGRV</sequence>
<protein>
    <recommendedName>
        <fullName>Alkaline nuclease</fullName>
        <ecNumber>3.1.-.-</ecNumber>
    </recommendedName>
</protein>
<feature type="chain" id="PRO_0000115699" description="Alkaline nuclease">
    <location>
        <begin position="1"/>
        <end position="150" status="greater than"/>
    </location>
</feature>
<feature type="non-terminal residue">
    <location>
        <position position="150"/>
    </location>
</feature>
<organismHost>
    <name type="scientific">Sus scrofa</name>
    <name type="common">Pig</name>
    <dbReference type="NCBI Taxonomy" id="9823"/>
</organismHost>
<evidence type="ECO:0000305" key="1"/>
<keyword id="KW-0255">Endonuclease</keyword>
<keyword id="KW-0269">Exonuclease</keyword>
<keyword id="KW-0378">Hydrolase</keyword>
<keyword id="KW-0540">Nuclease</keyword>
<accession>P30660</accession>
<comment type="similarity">
    <text evidence="1">Belongs to the baculo-herpesviridae alkaline nuclease family.</text>
</comment>
<dbReference type="EC" id="3.1.-.-"/>
<dbReference type="EMBL" id="M94870">
    <property type="protein sequence ID" value="AAA47482.1"/>
    <property type="molecule type" value="Genomic_DNA"/>
</dbReference>
<dbReference type="PIR" id="C42744">
    <property type="entry name" value="C42744"/>
</dbReference>
<dbReference type="SMR" id="P30660"/>
<dbReference type="GO" id="GO:0004519">
    <property type="term" value="F:endonuclease activity"/>
    <property type="evidence" value="ECO:0007669"/>
    <property type="project" value="UniProtKB-KW"/>
</dbReference>
<dbReference type="GO" id="GO:0004527">
    <property type="term" value="F:exonuclease activity"/>
    <property type="evidence" value="ECO:0007669"/>
    <property type="project" value="UniProtKB-KW"/>
</dbReference>
<dbReference type="InterPro" id="IPR011335">
    <property type="entry name" value="Restrct_endonuc-II-like"/>
</dbReference>
<dbReference type="InterPro" id="IPR034720">
    <property type="entry name" value="Viral_alk_exo"/>
</dbReference>
<dbReference type="Pfam" id="PF01771">
    <property type="entry name" value="Viral_alk_exo"/>
    <property type="match status" value="1"/>
</dbReference>
<dbReference type="SUPFAM" id="SSF52980">
    <property type="entry name" value="Restriction endonuclease-like"/>
    <property type="match status" value="1"/>
</dbReference>
<name>AN_SUHVN</name>
<reference key="1">
    <citation type="journal article" date="1992" name="J. Virol.">
        <title>Herpesviruses encode an unusual protein-serine/threonine kinase which is nonessential for growth in cultured cells.</title>
        <authorList>
            <person name="de Wind N."/>
            <person name="Domen J."/>
            <person name="Berns A.A."/>
        </authorList>
    </citation>
    <scope>NUCLEOTIDE SEQUENCE [GENOMIC DNA]</scope>
</reference>
<proteinExistence type="inferred from homology"/>